<accession>Q2KIX1</accession>
<keyword id="KW-0053">Apoptosis</keyword>
<keyword id="KW-0217">Developmental protein</keyword>
<keyword id="KW-0221">Differentiation</keyword>
<keyword id="KW-1185">Reference proteome</keyword>
<comment type="function">
    <text evidence="1">Involved in the regulation of growth and apoptosis. Mediates activation of stress-responsive MTK1/MEKK4 MAPKKK (By similarity).</text>
</comment>
<comment type="subunit">
    <text evidence="1">Undergoes concentration-dependent homodimerization, which is required for growth inhibititory activity and enhances interaction with PCNA. Interacts with GADD45GIP1. Interacts with PCNA (By similarity).</text>
</comment>
<comment type="domain">
    <text evidence="1">Two central helices mediate homodimerization through parallel packing.</text>
</comment>
<comment type="similarity">
    <text evidence="2">Belongs to the GADD45 family.</text>
</comment>
<dbReference type="EMBL" id="BC112476">
    <property type="protein sequence ID" value="AAI12477.1"/>
    <property type="molecule type" value="mRNA"/>
</dbReference>
<dbReference type="RefSeq" id="NP_001039366.1">
    <property type="nucleotide sequence ID" value="NM_001045901.1"/>
</dbReference>
<dbReference type="SMR" id="Q2KIX1"/>
<dbReference type="FunCoup" id="Q2KIX1">
    <property type="interactions" value="584"/>
</dbReference>
<dbReference type="STRING" id="9913.ENSBTAP00000003943"/>
<dbReference type="PaxDb" id="9913-ENSBTAP00000003943"/>
<dbReference type="GeneID" id="504939"/>
<dbReference type="KEGG" id="bta:504939"/>
<dbReference type="CTD" id="10912"/>
<dbReference type="eggNOG" id="ENOG502RXKU">
    <property type="taxonomic scope" value="Eukaryota"/>
</dbReference>
<dbReference type="HOGENOM" id="CLU_118164_0_0_1"/>
<dbReference type="InParanoid" id="Q2KIX1"/>
<dbReference type="OrthoDB" id="5976967at2759"/>
<dbReference type="TreeFam" id="TF300196"/>
<dbReference type="Proteomes" id="UP000009136">
    <property type="component" value="Unplaced"/>
</dbReference>
<dbReference type="GO" id="GO:0005737">
    <property type="term" value="C:cytoplasm"/>
    <property type="evidence" value="ECO:0000318"/>
    <property type="project" value="GO_Central"/>
</dbReference>
<dbReference type="GO" id="GO:0005634">
    <property type="term" value="C:nucleus"/>
    <property type="evidence" value="ECO:0000318"/>
    <property type="project" value="GO_Central"/>
</dbReference>
<dbReference type="GO" id="GO:0006915">
    <property type="term" value="P:apoptotic process"/>
    <property type="evidence" value="ECO:0007669"/>
    <property type="project" value="UniProtKB-KW"/>
</dbReference>
<dbReference type="GO" id="GO:0030154">
    <property type="term" value="P:cell differentiation"/>
    <property type="evidence" value="ECO:0007669"/>
    <property type="project" value="UniProtKB-KW"/>
</dbReference>
<dbReference type="GO" id="GO:0051726">
    <property type="term" value="P:regulation of cell cycle"/>
    <property type="evidence" value="ECO:0000318"/>
    <property type="project" value="GO_Central"/>
</dbReference>
<dbReference type="FunFam" id="3.30.1330.30:FF:000018">
    <property type="entry name" value="growth arrest and DNA damage-inducible protein GADD45 gamma"/>
    <property type="match status" value="1"/>
</dbReference>
<dbReference type="Gene3D" id="3.30.1330.30">
    <property type="match status" value="1"/>
</dbReference>
<dbReference type="InterPro" id="IPR024824">
    <property type="entry name" value="GADD45"/>
</dbReference>
<dbReference type="InterPro" id="IPR029064">
    <property type="entry name" value="Ribosomal_eL30-like_sf"/>
</dbReference>
<dbReference type="InterPro" id="IPR004038">
    <property type="entry name" value="Ribosomal_eL8/eL30/eS12/Gad45"/>
</dbReference>
<dbReference type="PANTHER" id="PTHR10411">
    <property type="entry name" value="GROWTH ARREST AND DNA DAMAGE-INDUCIBLE PROTEIN GADD45"/>
    <property type="match status" value="1"/>
</dbReference>
<dbReference type="PANTHER" id="PTHR10411:SF4">
    <property type="entry name" value="GROWTH ARREST AND DNA DAMAGE-INDUCIBLE PROTEIN GADD45 GAMMA"/>
    <property type="match status" value="1"/>
</dbReference>
<dbReference type="Pfam" id="PF01248">
    <property type="entry name" value="Ribosomal_L7Ae"/>
    <property type="match status" value="1"/>
</dbReference>
<dbReference type="SUPFAM" id="SSF55315">
    <property type="entry name" value="L30e-like"/>
    <property type="match status" value="1"/>
</dbReference>
<evidence type="ECO:0000250" key="1"/>
<evidence type="ECO:0000305" key="2"/>
<reference key="1">
    <citation type="submission" date="2006-01" db="EMBL/GenBank/DDBJ databases">
        <authorList>
            <consortium name="NIH - Mammalian Gene Collection (MGC) project"/>
        </authorList>
    </citation>
    <scope>NUCLEOTIDE SEQUENCE [LARGE SCALE MRNA]</scope>
    <source>
        <strain>Hereford</strain>
        <tissue>Testis</tissue>
    </source>
</reference>
<gene>
    <name type="primary">GADD45G</name>
</gene>
<sequence length="159" mass="17294">MTLEELRGQDTVPESTARMQGAGKALHELLLSAQRQGCLTAGVYESAKVLNVDPDNVTFCVLAADEEDEGDIALQIHFTLIQAFCCENDIDIVRVGDVQRLAAIVGTGDESGAPVDLHCILISNPNEDAWKDPALEKLSLFCEESRSVNDWVPNITLPE</sequence>
<name>GA45G_BOVIN</name>
<protein>
    <recommendedName>
        <fullName>Growth arrest and DNA damage-inducible protein GADD45 gamma</fullName>
    </recommendedName>
</protein>
<organism>
    <name type="scientific">Bos taurus</name>
    <name type="common">Bovine</name>
    <dbReference type="NCBI Taxonomy" id="9913"/>
    <lineage>
        <taxon>Eukaryota</taxon>
        <taxon>Metazoa</taxon>
        <taxon>Chordata</taxon>
        <taxon>Craniata</taxon>
        <taxon>Vertebrata</taxon>
        <taxon>Euteleostomi</taxon>
        <taxon>Mammalia</taxon>
        <taxon>Eutheria</taxon>
        <taxon>Laurasiatheria</taxon>
        <taxon>Artiodactyla</taxon>
        <taxon>Ruminantia</taxon>
        <taxon>Pecora</taxon>
        <taxon>Bovidae</taxon>
        <taxon>Bovinae</taxon>
        <taxon>Bos</taxon>
    </lineage>
</organism>
<proteinExistence type="evidence at transcript level"/>
<feature type="chain" id="PRO_0000247676" description="Growth arrest and DNA damage-inducible protein GADD45 gamma">
    <location>
        <begin position="1"/>
        <end position="159"/>
    </location>
</feature>
<feature type="region of interest" description="Homodimerization" evidence="1">
    <location>
        <begin position="43"/>
        <end position="86"/>
    </location>
</feature>